<name>OBG_THET8</name>
<reference key="1">
    <citation type="submission" date="2003-05" db="EMBL/GenBank/DDBJ databases">
        <title>Crystal structure of the conserved protein TT1381 from Thermus thermophilus HB8.</title>
        <authorList>
            <person name="Kukimoto-Niino M."/>
            <person name="Murayama K."/>
            <person name="Terada T."/>
            <person name="Kuramitsu S."/>
            <person name="Shirouzu M."/>
            <person name="Yokoyama S."/>
        </authorList>
    </citation>
    <scope>NUCLEOTIDE SEQUENCE [GENOMIC DNA]</scope>
</reference>
<reference key="2">
    <citation type="submission" date="2004-11" db="EMBL/GenBank/DDBJ databases">
        <title>Complete genome sequence of Thermus thermophilus HB8.</title>
        <authorList>
            <person name="Masui R."/>
            <person name="Kurokawa K."/>
            <person name="Nakagawa N."/>
            <person name="Tokunaga F."/>
            <person name="Koyama Y."/>
            <person name="Shibata T."/>
            <person name="Oshima T."/>
            <person name="Yokoyama S."/>
            <person name="Yasunaga T."/>
            <person name="Kuramitsu S."/>
        </authorList>
    </citation>
    <scope>NUCLEOTIDE SEQUENCE [LARGE SCALE GENOMIC DNA]</scope>
    <source>
        <strain>ATCC 27634 / DSM 579 / HB8</strain>
    </source>
</reference>
<reference key="3">
    <citation type="journal article" date="2004" name="J. Mol. Biol.">
        <title>Crystal structure of the GTP-binding protein Obg from Thermus thermophilus HB8.</title>
        <authorList>
            <person name="Kukimoto-Niino M."/>
            <person name="Murayama K."/>
            <person name="Inoue M."/>
            <person name="Terada T."/>
            <person name="Tame J.R."/>
            <person name="Kuramitsu S."/>
            <person name="Shirouzu M."/>
            <person name="Yokoyama S."/>
        </authorList>
    </citation>
    <scope>X-RAY CRYSTALLOGRAPHY (2.07 ANGSTROMS)</scope>
    <scope>SUBUNIT</scope>
</reference>
<feature type="chain" id="PRO_0000386361" description="GTPase Obg">
    <location>
        <begin position="1"/>
        <end position="416"/>
    </location>
</feature>
<feature type="domain" description="Obg" evidence="3">
    <location>
        <begin position="1"/>
        <end position="157"/>
    </location>
</feature>
<feature type="domain" description="OBG-type G" evidence="1">
    <location>
        <begin position="158"/>
        <end position="324"/>
    </location>
</feature>
<feature type="domain" description="OCT" evidence="2">
    <location>
        <begin position="336"/>
        <end position="414"/>
    </location>
</feature>
<feature type="region of interest" description="Disordered" evidence="4">
    <location>
        <begin position="25"/>
        <end position="44"/>
    </location>
</feature>
<feature type="region of interest" description="Disordered" evidence="4">
    <location>
        <begin position="62"/>
        <end position="82"/>
    </location>
</feature>
<feature type="compositionally biased region" description="Gly residues" evidence="4">
    <location>
        <begin position="32"/>
        <end position="42"/>
    </location>
</feature>
<feature type="compositionally biased region" description="Basic and acidic residues" evidence="4">
    <location>
        <begin position="63"/>
        <end position="72"/>
    </location>
</feature>
<feature type="binding site" evidence="1">
    <location>
        <begin position="164"/>
        <end position="171"/>
    </location>
    <ligand>
        <name>GTP</name>
        <dbReference type="ChEBI" id="CHEBI:37565"/>
    </ligand>
</feature>
<feature type="binding site" evidence="1">
    <location>
        <position position="171"/>
    </location>
    <ligand>
        <name>Mg(2+)</name>
        <dbReference type="ChEBI" id="CHEBI:18420"/>
    </ligand>
</feature>
<feature type="binding site" evidence="1">
    <location>
        <begin position="189"/>
        <end position="193"/>
    </location>
    <ligand>
        <name>GTP</name>
        <dbReference type="ChEBI" id="CHEBI:37565"/>
    </ligand>
</feature>
<feature type="binding site" evidence="1">
    <location>
        <position position="191"/>
    </location>
    <ligand>
        <name>Mg(2+)</name>
        <dbReference type="ChEBI" id="CHEBI:18420"/>
    </ligand>
</feature>
<feature type="binding site" evidence="1">
    <location>
        <begin position="211"/>
        <end position="214"/>
    </location>
    <ligand>
        <name>GTP</name>
        <dbReference type="ChEBI" id="CHEBI:37565"/>
    </ligand>
</feature>
<feature type="binding site" evidence="1">
    <location>
        <begin position="277"/>
        <end position="280"/>
    </location>
    <ligand>
        <name>GTP</name>
        <dbReference type="ChEBI" id="CHEBI:37565"/>
    </ligand>
</feature>
<feature type="binding site" evidence="1">
    <location>
        <begin position="305"/>
        <end position="307"/>
    </location>
    <ligand>
        <name>GTP</name>
        <dbReference type="ChEBI" id="CHEBI:37565"/>
    </ligand>
</feature>
<feature type="strand" evidence="6">
    <location>
        <begin position="4"/>
        <end position="11"/>
    </location>
</feature>
<feature type="strand" evidence="6">
    <location>
        <begin position="44"/>
        <end position="48"/>
    </location>
</feature>
<feature type="turn" evidence="6">
    <location>
        <begin position="73"/>
        <end position="75"/>
    </location>
</feature>
<feature type="strand" evidence="6">
    <location>
        <begin position="84"/>
        <end position="88"/>
    </location>
</feature>
<feature type="strand" evidence="6">
    <location>
        <begin position="90"/>
        <end position="96"/>
    </location>
</feature>
<feature type="turn" evidence="6">
    <location>
        <begin position="97"/>
        <end position="99"/>
    </location>
</feature>
<feature type="strand" evidence="6">
    <location>
        <begin position="102"/>
        <end position="106"/>
    </location>
</feature>
<feature type="strand" evidence="6">
    <location>
        <begin position="112"/>
        <end position="116"/>
    </location>
</feature>
<feature type="helix" evidence="6">
    <location>
        <begin position="125"/>
        <end position="128"/>
    </location>
</feature>
<feature type="strand" evidence="6">
    <location>
        <begin position="138"/>
        <end position="140"/>
    </location>
</feature>
<feature type="strand" evidence="6">
    <location>
        <begin position="147"/>
        <end position="154"/>
    </location>
</feature>
<feature type="strand" evidence="6">
    <location>
        <begin position="159"/>
        <end position="163"/>
    </location>
</feature>
<feature type="helix" evidence="6">
    <location>
        <begin position="166"/>
        <end position="168"/>
    </location>
</feature>
<feature type="helix" evidence="6">
    <location>
        <begin position="170"/>
        <end position="177"/>
    </location>
</feature>
<feature type="strand" evidence="6">
    <location>
        <begin position="195"/>
        <end position="200"/>
    </location>
</feature>
<feature type="strand" evidence="6">
    <location>
        <begin position="202"/>
        <end position="204"/>
    </location>
</feature>
<feature type="strand" evidence="6">
    <location>
        <begin position="206"/>
        <end position="211"/>
    </location>
</feature>
<feature type="helix" evidence="6">
    <location>
        <begin position="219"/>
        <end position="221"/>
    </location>
</feature>
<feature type="helix" evidence="6">
    <location>
        <begin position="227"/>
        <end position="233"/>
    </location>
</feature>
<feature type="strand" evidence="6">
    <location>
        <begin position="235"/>
        <end position="244"/>
    </location>
</feature>
<feature type="helix" evidence="6">
    <location>
        <begin position="249"/>
        <end position="263"/>
    </location>
</feature>
<feature type="helix" evidence="6">
    <location>
        <begin position="265"/>
        <end position="269"/>
    </location>
</feature>
<feature type="strand" evidence="6">
    <location>
        <begin position="272"/>
        <end position="277"/>
    </location>
</feature>
<feature type="helix" evidence="6">
    <location>
        <begin position="284"/>
        <end position="295"/>
    </location>
</feature>
<feature type="turn" evidence="6">
    <location>
        <begin position="296"/>
        <end position="298"/>
    </location>
</feature>
<feature type="strand" evidence="6">
    <location>
        <begin position="301"/>
        <end position="303"/>
    </location>
</feature>
<feature type="turn" evidence="6">
    <location>
        <begin position="306"/>
        <end position="308"/>
    </location>
</feature>
<feature type="helix" evidence="6">
    <location>
        <begin position="312"/>
        <end position="324"/>
    </location>
</feature>
<feature type="strand" evidence="6">
    <location>
        <begin position="345"/>
        <end position="350"/>
    </location>
</feature>
<feature type="strand" evidence="6">
    <location>
        <begin position="353"/>
        <end position="357"/>
    </location>
</feature>
<feature type="helix" evidence="6">
    <location>
        <begin position="359"/>
        <end position="365"/>
    </location>
</feature>
<feature type="strand" evidence="6">
    <location>
        <begin position="368"/>
        <end position="370"/>
    </location>
</feature>
<feature type="helix" evidence="6">
    <location>
        <begin position="373"/>
        <end position="375"/>
    </location>
</feature>
<feature type="helix" evidence="6">
    <location>
        <begin position="376"/>
        <end position="385"/>
    </location>
</feature>
<feature type="helix" evidence="6">
    <location>
        <begin position="388"/>
        <end position="393"/>
    </location>
</feature>
<feature type="turn" evidence="6">
    <location>
        <begin position="394"/>
        <end position="396"/>
    </location>
</feature>
<feature type="strand" evidence="6">
    <location>
        <begin position="402"/>
        <end position="405"/>
    </location>
</feature>
<feature type="strand" evidence="6">
    <location>
        <begin position="408"/>
        <end position="411"/>
    </location>
</feature>
<proteinExistence type="evidence at protein level"/>
<accession>Q5SHE9</accession>
<accession>Q7X493</accession>
<organism>
    <name type="scientific">Thermus thermophilus (strain ATCC 27634 / DSM 579 / HB8)</name>
    <dbReference type="NCBI Taxonomy" id="300852"/>
    <lineage>
        <taxon>Bacteria</taxon>
        <taxon>Thermotogati</taxon>
        <taxon>Deinococcota</taxon>
        <taxon>Deinococci</taxon>
        <taxon>Thermales</taxon>
        <taxon>Thermaceae</taxon>
        <taxon>Thermus</taxon>
    </lineage>
</organism>
<dbReference type="EC" id="3.6.5.-" evidence="1"/>
<dbReference type="EMBL" id="AB110607">
    <property type="protein sequence ID" value="BAC76805.2"/>
    <property type="molecule type" value="Genomic_DNA"/>
</dbReference>
<dbReference type="EMBL" id="AP008226">
    <property type="protein sequence ID" value="BAD71604.1"/>
    <property type="molecule type" value="Genomic_DNA"/>
</dbReference>
<dbReference type="RefSeq" id="YP_145047.1">
    <property type="nucleotide sequence ID" value="NC_006461.1"/>
</dbReference>
<dbReference type="PDB" id="1UDX">
    <property type="method" value="X-ray"/>
    <property type="resolution" value="2.07 A"/>
    <property type="chains" value="A=1-416"/>
</dbReference>
<dbReference type="PDBsum" id="1UDX"/>
<dbReference type="SMR" id="Q5SHE9"/>
<dbReference type="EnsemblBacteria" id="BAD71604">
    <property type="protein sequence ID" value="BAD71604"/>
    <property type="gene ID" value="BAD71604"/>
</dbReference>
<dbReference type="GeneID" id="3169474"/>
<dbReference type="KEGG" id="ttj:TTHA1781"/>
<dbReference type="PATRIC" id="fig|300852.9.peg.1751"/>
<dbReference type="eggNOG" id="COG0536">
    <property type="taxonomic scope" value="Bacteria"/>
</dbReference>
<dbReference type="HOGENOM" id="CLU_011747_2_1_0"/>
<dbReference type="PhylomeDB" id="Q5SHE9"/>
<dbReference type="EvolutionaryTrace" id="Q5SHE9"/>
<dbReference type="Proteomes" id="UP000000532">
    <property type="component" value="Chromosome"/>
</dbReference>
<dbReference type="GO" id="GO:0005737">
    <property type="term" value="C:cytoplasm"/>
    <property type="evidence" value="ECO:0007669"/>
    <property type="project" value="UniProtKB-SubCell"/>
</dbReference>
<dbReference type="GO" id="GO:0005525">
    <property type="term" value="F:GTP binding"/>
    <property type="evidence" value="ECO:0007669"/>
    <property type="project" value="UniProtKB-UniRule"/>
</dbReference>
<dbReference type="GO" id="GO:0003924">
    <property type="term" value="F:GTPase activity"/>
    <property type="evidence" value="ECO:0007669"/>
    <property type="project" value="UniProtKB-UniRule"/>
</dbReference>
<dbReference type="GO" id="GO:0000287">
    <property type="term" value="F:magnesium ion binding"/>
    <property type="evidence" value="ECO:0007669"/>
    <property type="project" value="InterPro"/>
</dbReference>
<dbReference type="GO" id="GO:0042254">
    <property type="term" value="P:ribosome biogenesis"/>
    <property type="evidence" value="ECO:0007669"/>
    <property type="project" value="UniProtKB-UniRule"/>
</dbReference>
<dbReference type="CDD" id="cd01898">
    <property type="entry name" value="Obg"/>
    <property type="match status" value="1"/>
</dbReference>
<dbReference type="FunFam" id="2.70.210.12:FF:000001">
    <property type="entry name" value="GTPase Obg"/>
    <property type="match status" value="1"/>
</dbReference>
<dbReference type="Gene3D" id="3.30.300.350">
    <property type="entry name" value="GTP-binding protein OBG, C-terminal domain"/>
    <property type="match status" value="1"/>
</dbReference>
<dbReference type="Gene3D" id="2.70.210.12">
    <property type="entry name" value="GTP1/OBG domain"/>
    <property type="match status" value="1"/>
</dbReference>
<dbReference type="Gene3D" id="3.40.50.300">
    <property type="entry name" value="P-loop containing nucleotide triphosphate hydrolases"/>
    <property type="match status" value="1"/>
</dbReference>
<dbReference type="HAMAP" id="MF_01454">
    <property type="entry name" value="GTPase_Obg"/>
    <property type="match status" value="1"/>
</dbReference>
<dbReference type="InterPro" id="IPR031167">
    <property type="entry name" value="G_OBG"/>
</dbReference>
<dbReference type="InterPro" id="IPR006073">
    <property type="entry name" value="GTP-bd"/>
</dbReference>
<dbReference type="InterPro" id="IPR014100">
    <property type="entry name" value="GTP-bd_Obg/CgtA"/>
</dbReference>
<dbReference type="InterPro" id="IPR036346">
    <property type="entry name" value="GTP-bd_prot_GTP1/OBG_C_sf"/>
</dbReference>
<dbReference type="InterPro" id="IPR006074">
    <property type="entry name" value="GTP1-OBG_CS"/>
</dbReference>
<dbReference type="InterPro" id="IPR006169">
    <property type="entry name" value="GTP1_OBG_dom"/>
</dbReference>
<dbReference type="InterPro" id="IPR036726">
    <property type="entry name" value="GTP1_OBG_dom_sf"/>
</dbReference>
<dbReference type="InterPro" id="IPR045086">
    <property type="entry name" value="OBG_GTPase"/>
</dbReference>
<dbReference type="InterPro" id="IPR015349">
    <property type="entry name" value="OCT_dom"/>
</dbReference>
<dbReference type="InterPro" id="IPR027417">
    <property type="entry name" value="P-loop_NTPase"/>
</dbReference>
<dbReference type="InterPro" id="IPR005225">
    <property type="entry name" value="Small_GTP-bd"/>
</dbReference>
<dbReference type="NCBIfam" id="TIGR02729">
    <property type="entry name" value="Obg_CgtA"/>
    <property type="match status" value="1"/>
</dbReference>
<dbReference type="NCBIfam" id="TIGR03595">
    <property type="entry name" value="Obg_CgtA_exten"/>
    <property type="match status" value="1"/>
</dbReference>
<dbReference type="NCBIfam" id="NF008954">
    <property type="entry name" value="PRK12296.1"/>
    <property type="match status" value="1"/>
</dbReference>
<dbReference type="NCBIfam" id="NF008955">
    <property type="entry name" value="PRK12297.1"/>
    <property type="match status" value="1"/>
</dbReference>
<dbReference type="NCBIfam" id="NF008956">
    <property type="entry name" value="PRK12299.1"/>
    <property type="match status" value="1"/>
</dbReference>
<dbReference type="NCBIfam" id="TIGR00231">
    <property type="entry name" value="small_GTP"/>
    <property type="match status" value="1"/>
</dbReference>
<dbReference type="PANTHER" id="PTHR11702">
    <property type="entry name" value="DEVELOPMENTALLY REGULATED GTP-BINDING PROTEIN-RELATED"/>
    <property type="match status" value="1"/>
</dbReference>
<dbReference type="PANTHER" id="PTHR11702:SF31">
    <property type="entry name" value="MITOCHONDRIAL RIBOSOME-ASSOCIATED GTPASE 2"/>
    <property type="match status" value="1"/>
</dbReference>
<dbReference type="Pfam" id="PF09269">
    <property type="entry name" value="DUF1967"/>
    <property type="match status" value="1"/>
</dbReference>
<dbReference type="Pfam" id="PF01018">
    <property type="entry name" value="GTP1_OBG"/>
    <property type="match status" value="1"/>
</dbReference>
<dbReference type="Pfam" id="PF01926">
    <property type="entry name" value="MMR_HSR1"/>
    <property type="match status" value="1"/>
</dbReference>
<dbReference type="PRINTS" id="PR00326">
    <property type="entry name" value="GTP1OBG"/>
</dbReference>
<dbReference type="SUPFAM" id="SSF102741">
    <property type="entry name" value="Obg GTP-binding protein C-terminal domain"/>
    <property type="match status" value="1"/>
</dbReference>
<dbReference type="SUPFAM" id="SSF82051">
    <property type="entry name" value="Obg GTP-binding protein N-terminal domain"/>
    <property type="match status" value="1"/>
</dbReference>
<dbReference type="SUPFAM" id="SSF52540">
    <property type="entry name" value="P-loop containing nucleoside triphosphate hydrolases"/>
    <property type="match status" value="1"/>
</dbReference>
<dbReference type="PROSITE" id="PS51710">
    <property type="entry name" value="G_OBG"/>
    <property type="match status" value="1"/>
</dbReference>
<dbReference type="PROSITE" id="PS00905">
    <property type="entry name" value="GTP1_OBG"/>
    <property type="match status" value="1"/>
</dbReference>
<dbReference type="PROSITE" id="PS51883">
    <property type="entry name" value="OBG"/>
    <property type="match status" value="1"/>
</dbReference>
<dbReference type="PROSITE" id="PS51881">
    <property type="entry name" value="OCT"/>
    <property type="match status" value="1"/>
</dbReference>
<keyword id="KW-0002">3D-structure</keyword>
<keyword id="KW-0963">Cytoplasm</keyword>
<keyword id="KW-0342">GTP-binding</keyword>
<keyword id="KW-0378">Hydrolase</keyword>
<keyword id="KW-0460">Magnesium</keyword>
<keyword id="KW-0479">Metal-binding</keyword>
<keyword id="KW-0547">Nucleotide-binding</keyword>
<keyword id="KW-1185">Reference proteome</keyword>
<sequence>MFQDVLVITVAAGRGGDGAVSFRREKFVPKGGPDGGDGGRGGSVYLRARGSVDSLSRLSKRTYKAEDGEHGRGSQQHGRGGEDLVIEVPRGTRVFDADTGELLADLTEEGQTVLVARGGAGGRGNMHFVSPTRQAPRFAEAGEEGEKRRLRLELMLIADVGLVGYPNAGKSSLLAAMTRAHPKIAPYPFTTLSPNLGVVEVSEEERFTLADIPGIIEGASEGKGLGLEFLRHIARTRVLLYVLDAADEPLKTLETLRKEVGAYDPALLRRPSLVALNKVDLLEEEAVKALADALAREGLAVLPVSALTGAGLPALKEALHALVRSTPPPEMPKPVPRKEVQAGVEVVPVAEGVYEVRAPEVERYLARIKGDLMEAAGYLQEVFRRQGVEAALRAKGVRAGDLVRIGGLEFEYIPEV</sequence>
<gene>
    <name evidence="1" type="primary">obg</name>
    <name type="ordered locus">TTHA1781</name>
</gene>
<comment type="function">
    <text evidence="1">An essential GTPase which binds GTP, GDP and possibly (p)ppGpp with moderate affinity, with high nucleotide exchange rates and a fairly low GTP hydrolysis rate. Plays a role in control of the cell cycle, stress response, ribosome biogenesis and in those bacteria that undergo differentiation, in morphogenesis control.</text>
</comment>
<comment type="cofactor">
    <cofactor evidence="1">
        <name>Mg(2+)</name>
        <dbReference type="ChEBI" id="CHEBI:18420"/>
    </cofactor>
</comment>
<comment type="subunit">
    <text evidence="1 5">Monomer.</text>
</comment>
<comment type="subcellular location">
    <subcellularLocation>
        <location evidence="1">Cytoplasm</location>
    </subcellularLocation>
</comment>
<comment type="similarity">
    <text evidence="1">Belongs to the TRAFAC class OBG-HflX-like GTPase superfamily. OBG GTPase family.</text>
</comment>
<evidence type="ECO:0000255" key="1">
    <source>
        <dbReference type="HAMAP-Rule" id="MF_01454"/>
    </source>
</evidence>
<evidence type="ECO:0000255" key="2">
    <source>
        <dbReference type="PROSITE-ProRule" id="PRU01229"/>
    </source>
</evidence>
<evidence type="ECO:0000255" key="3">
    <source>
        <dbReference type="PROSITE-ProRule" id="PRU01231"/>
    </source>
</evidence>
<evidence type="ECO:0000256" key="4">
    <source>
        <dbReference type="SAM" id="MobiDB-lite"/>
    </source>
</evidence>
<evidence type="ECO:0000269" key="5">
    <source>
    </source>
</evidence>
<evidence type="ECO:0007829" key="6">
    <source>
        <dbReference type="PDB" id="1UDX"/>
    </source>
</evidence>
<protein>
    <recommendedName>
        <fullName evidence="1">GTPase Obg</fullName>
        <ecNumber evidence="1">3.6.5.-</ecNumber>
    </recommendedName>
    <alternativeName>
        <fullName evidence="1">GTP-binding protein Obg</fullName>
    </alternativeName>
    <alternativeName>
        <fullName>TT1381</fullName>
    </alternativeName>
</protein>